<comment type="function">
    <text evidence="4">Carbohydrate-binding protein with a strong ligand preference for Glc2-N-glycan. May play a role in the early steps of protein N-glycosylation. Can bind di- or higher oligomers but not monomers of glucose, including maltose, maltotriose, maltotetraose, maltoheptaose, nigerose, kojibose, cellobiose and isomaltose, although based on their subcellular locations, these are unlikely to all be physiological ligands.</text>
</comment>
<comment type="subcellular location">
    <subcellularLocation>
        <location evidence="4">Endoplasmic reticulum membrane</location>
        <topology evidence="2 4">Single-pass type I membrane protein</topology>
    </subcellularLocation>
</comment>
<comment type="tissue specificity">
    <text evidence="4">Widely expressed throughout development including the anterior neuroectoderm and neural crest at stages 18 and 20, and the retina, hatching gland, otic vesicle, epibranchial placodes, pronephros and tail tip of later states. At stage 41, expressed in the liver, pancreas, branchial arches and proctodeum. Expressed broadly in adults in fat, intestine, gall bladder, eye, muscle, kidney, stomach, liver, heart, pancreas and lung.</text>
</comment>
<comment type="developmental stage">
    <text evidence="4">Expressed both maternally and zygotically.</text>
</comment>
<comment type="similarity">
    <text evidence="5">Belongs to the malectin family.</text>
</comment>
<protein>
    <recommendedName>
        <fullName evidence="1">Malectin-A</fullName>
    </recommendedName>
</protein>
<reference evidence="5" key="1">
    <citation type="journal article" date="2008" name="Mol. Biol. Cell">
        <title>Malectin: a novel carbohydrate-binding protein of the endoplasmic reticulum and a candidate player in the early steps of protein N-glycosylation.</title>
        <authorList>
            <person name="Schallus T."/>
            <person name="Jaeckh C."/>
            <person name="Feher K."/>
            <person name="Palma A.S."/>
            <person name="Liu Y."/>
            <person name="Simpson J.C."/>
            <person name="Mackeen M."/>
            <person name="Stier G."/>
            <person name="Gibson T.J."/>
            <person name="Feizi T."/>
            <person name="Pieler T."/>
            <person name="Muhle-Goll C."/>
        </authorList>
    </citation>
    <scope>NUCLEOTIDE SEQUENCE [MRNA]</scope>
    <scope>STRUCTURE BY NMR OF 27-213 IN COMPLEX WITH NIGEROSE</scope>
    <scope>FUNCTION</scope>
    <scope>SUBCELLULAR LOCATION</scope>
    <scope>TISSUE SPECIFICITY</scope>
    <scope>DEVELOPMENTAL STAGE</scope>
    <source>
        <tissue evidence="4">Pancreas</tissue>
    </source>
</reference>
<reference evidence="6" key="2">
    <citation type="submission" date="2004-06" db="EMBL/GenBank/DDBJ databases">
        <authorList>
            <consortium name="NIH - Xenopus Gene Collection (XGC) project"/>
        </authorList>
    </citation>
    <scope>NUCLEOTIDE SEQUENCE [LARGE SCALE MRNA]</scope>
    <source>
        <tissue evidence="6">Embryo</tissue>
    </source>
</reference>
<name>MLECA_XENLA</name>
<sequence length="276" mass="30688">MLSIRTVLGPLATILLTVLGPFGAHGSGLADKVIWAVNAGGESHVDVHGIHYRKDPLEGRVGRASDYGMKLPILRSNPEDQVLYQTERYNEDSFGYDIPIKEEGEYVLVLKFAEVYFAQSQQKVFDVRVNGHTVVKDLDIFDRVGHSTAHDEIIPISIKKGKLSVQGEVSTFTGKLSVEFVKGYYDNPKVCALFIMKGTADDVPMLQPHPGLEKKEEEEEEEEEEGSTSKKQINKNRVQSGPRTPNPYASDNSSLMFPILVAFGVFIPTLFCLCRL</sequence>
<evidence type="ECO:0000250" key="1">
    <source>
        <dbReference type="UniProtKB" id="Q14165"/>
    </source>
</evidence>
<evidence type="ECO:0000255" key="2"/>
<evidence type="ECO:0000256" key="3">
    <source>
        <dbReference type="SAM" id="MobiDB-lite"/>
    </source>
</evidence>
<evidence type="ECO:0000269" key="4">
    <source>
    </source>
</evidence>
<evidence type="ECO:0000305" key="5"/>
<evidence type="ECO:0000312" key="6">
    <source>
        <dbReference type="EMBL" id="AAH72149.1"/>
    </source>
</evidence>
<evidence type="ECO:0007829" key="7">
    <source>
        <dbReference type="PDB" id="2JWP"/>
    </source>
</evidence>
<evidence type="ECO:0007829" key="8">
    <source>
        <dbReference type="PDB" id="2K46"/>
    </source>
</evidence>
<gene>
    <name evidence="1" type="primary">mlec-a</name>
</gene>
<proteinExistence type="evidence at protein level"/>
<accession>Q6INX3</accession>
<organism>
    <name type="scientific">Xenopus laevis</name>
    <name type="common">African clawed frog</name>
    <dbReference type="NCBI Taxonomy" id="8355"/>
    <lineage>
        <taxon>Eukaryota</taxon>
        <taxon>Metazoa</taxon>
        <taxon>Chordata</taxon>
        <taxon>Craniata</taxon>
        <taxon>Vertebrata</taxon>
        <taxon>Euteleostomi</taxon>
        <taxon>Amphibia</taxon>
        <taxon>Batrachia</taxon>
        <taxon>Anura</taxon>
        <taxon>Pipoidea</taxon>
        <taxon>Pipidae</taxon>
        <taxon>Xenopodinae</taxon>
        <taxon>Xenopus</taxon>
        <taxon>Xenopus</taxon>
    </lineage>
</organism>
<keyword id="KW-0002">3D-structure</keyword>
<keyword id="KW-0119">Carbohydrate metabolism</keyword>
<keyword id="KW-0256">Endoplasmic reticulum</keyword>
<keyword id="KW-0325">Glycoprotein</keyword>
<keyword id="KW-0472">Membrane</keyword>
<keyword id="KW-1185">Reference proteome</keyword>
<keyword id="KW-0732">Signal</keyword>
<keyword id="KW-0812">Transmembrane</keyword>
<keyword id="KW-1133">Transmembrane helix</keyword>
<feature type="signal peptide" evidence="5">
    <location>
        <begin position="1"/>
        <end position="26"/>
    </location>
</feature>
<feature type="chain" id="PRO_0000358590" description="Malectin-A" evidence="2">
    <location>
        <begin position="27"/>
        <end position="276"/>
    </location>
</feature>
<feature type="topological domain" description="Lumenal" evidence="2">
    <location>
        <begin position="27"/>
        <end position="253"/>
    </location>
</feature>
<feature type="transmembrane region" description="Helical" evidence="2">
    <location>
        <begin position="254"/>
        <end position="274"/>
    </location>
</feature>
<feature type="topological domain" description="Cytoplasmic" evidence="2">
    <location>
        <begin position="275"/>
        <end position="276"/>
    </location>
</feature>
<feature type="region of interest" description="Disordered" evidence="3">
    <location>
        <begin position="204"/>
        <end position="247"/>
    </location>
</feature>
<feature type="compositionally biased region" description="Acidic residues" evidence="3">
    <location>
        <begin position="216"/>
        <end position="226"/>
    </location>
</feature>
<feature type="compositionally biased region" description="Polar residues" evidence="3">
    <location>
        <begin position="229"/>
        <end position="247"/>
    </location>
</feature>
<feature type="binding site" evidence="4">
    <location>
        <position position="67"/>
    </location>
    <ligand>
        <name>a carbohydrate</name>
        <dbReference type="ChEBI" id="CHEBI:16646"/>
    </ligand>
</feature>
<feature type="binding site" evidence="4">
    <location>
        <position position="89"/>
    </location>
    <ligand>
        <name>a carbohydrate</name>
        <dbReference type="ChEBI" id="CHEBI:16646"/>
    </ligand>
</feature>
<feature type="binding site" evidence="4">
    <location>
        <position position="116"/>
    </location>
    <ligand>
        <name>a carbohydrate</name>
        <dbReference type="ChEBI" id="CHEBI:16646"/>
    </ligand>
</feature>
<feature type="binding site" evidence="4">
    <location>
        <position position="117"/>
    </location>
    <ligand>
        <name>a carbohydrate</name>
        <dbReference type="ChEBI" id="CHEBI:16646"/>
    </ligand>
</feature>
<feature type="binding site" evidence="4">
    <location>
        <position position="186"/>
    </location>
    <ligand>
        <name>a carbohydrate</name>
        <dbReference type="ChEBI" id="CHEBI:16646"/>
    </ligand>
</feature>
<feature type="glycosylation site" description="N-linked (GlcNAc...) asparagine" evidence="2">
    <location>
        <position position="252"/>
    </location>
</feature>
<feature type="helix" evidence="7">
    <location>
        <begin position="29"/>
        <end position="32"/>
    </location>
</feature>
<feature type="strand" evidence="7">
    <location>
        <begin position="33"/>
        <end position="39"/>
    </location>
</feature>
<feature type="strand" evidence="7">
    <location>
        <begin position="41"/>
        <end position="46"/>
    </location>
</feature>
<feature type="turn" evidence="7">
    <location>
        <begin position="47"/>
        <end position="49"/>
    </location>
</feature>
<feature type="strand" evidence="7">
    <location>
        <begin position="50"/>
        <end position="52"/>
    </location>
</feature>
<feature type="strand" evidence="8">
    <location>
        <begin position="56"/>
        <end position="58"/>
    </location>
</feature>
<feature type="strand" evidence="7">
    <location>
        <begin position="74"/>
        <end position="76"/>
    </location>
</feature>
<feature type="helix" evidence="7">
    <location>
        <begin position="78"/>
        <end position="82"/>
    </location>
</feature>
<feature type="turn" evidence="7">
    <location>
        <begin position="83"/>
        <end position="85"/>
    </location>
</feature>
<feature type="strand" evidence="7">
    <location>
        <begin position="94"/>
        <end position="99"/>
    </location>
</feature>
<feature type="strand" evidence="7">
    <location>
        <begin position="104"/>
        <end position="113"/>
    </location>
</feature>
<feature type="strand" evidence="7">
    <location>
        <begin position="120"/>
        <end position="123"/>
    </location>
</feature>
<feature type="strand" evidence="7">
    <location>
        <begin position="125"/>
        <end position="129"/>
    </location>
</feature>
<feature type="strand" evidence="7">
    <location>
        <begin position="132"/>
        <end position="138"/>
    </location>
</feature>
<feature type="helix" evidence="7">
    <location>
        <begin position="140"/>
        <end position="144"/>
    </location>
</feature>
<feature type="strand" evidence="7">
    <location>
        <begin position="145"/>
        <end position="148"/>
    </location>
</feature>
<feature type="strand" evidence="7">
    <location>
        <begin position="150"/>
        <end position="159"/>
    </location>
</feature>
<feature type="strand" evidence="7">
    <location>
        <begin position="162"/>
        <end position="165"/>
    </location>
</feature>
<feature type="strand" evidence="7">
    <location>
        <begin position="168"/>
        <end position="171"/>
    </location>
</feature>
<feature type="strand" evidence="7">
    <location>
        <begin position="174"/>
        <end position="181"/>
    </location>
</feature>
<feature type="strand" evidence="7">
    <location>
        <begin position="183"/>
        <end position="185"/>
    </location>
</feature>
<feature type="strand" evidence="7">
    <location>
        <begin position="187"/>
        <end position="198"/>
    </location>
</feature>
<dbReference type="EMBL" id="BC072149">
    <property type="protein sequence ID" value="AAH72149.1"/>
    <property type="molecule type" value="mRNA"/>
</dbReference>
<dbReference type="RefSeq" id="NP_001085212.1">
    <property type="nucleotide sequence ID" value="NM_001091743.1"/>
</dbReference>
<dbReference type="PDB" id="2JWP">
    <property type="method" value="NMR"/>
    <property type="chains" value="A=28-201"/>
</dbReference>
<dbReference type="PDB" id="2K46">
    <property type="method" value="NMR"/>
    <property type="chains" value="A=27-213"/>
</dbReference>
<dbReference type="PDB" id="2KR2">
    <property type="method" value="NMR"/>
    <property type="chains" value="A=27-213"/>
</dbReference>
<dbReference type="PDBsum" id="2JWP"/>
<dbReference type="PDBsum" id="2K46"/>
<dbReference type="PDBsum" id="2KR2"/>
<dbReference type="SMR" id="Q6INX3"/>
<dbReference type="CAZy" id="CBM57">
    <property type="family name" value="Carbohydrate-Binding Module Family 57"/>
</dbReference>
<dbReference type="UniLectin" id="Q6INX3"/>
<dbReference type="GlyCosmos" id="Q6INX3">
    <property type="glycosylation" value="1 site, No reported glycans"/>
</dbReference>
<dbReference type="DNASU" id="432306"/>
<dbReference type="GeneID" id="432306"/>
<dbReference type="KEGG" id="xla:432306"/>
<dbReference type="AGR" id="Xenbase:XB-GENE-5734882"/>
<dbReference type="CTD" id="432306"/>
<dbReference type="Xenbase" id="XB-GENE-5734882">
    <property type="gene designation" value="mlec.S"/>
</dbReference>
<dbReference type="OMA" id="PNPYSMD"/>
<dbReference type="OrthoDB" id="10013439at2759"/>
<dbReference type="EvolutionaryTrace" id="Q6INX3"/>
<dbReference type="Proteomes" id="UP000186698">
    <property type="component" value="Chromosome 1S"/>
</dbReference>
<dbReference type="Bgee" id="432306">
    <property type="expression patterns" value="Expressed in neurula embryo and 19 other cell types or tissues"/>
</dbReference>
<dbReference type="GO" id="GO:0005783">
    <property type="term" value="C:endoplasmic reticulum"/>
    <property type="evidence" value="ECO:0000314"/>
    <property type="project" value="UniProtKB"/>
</dbReference>
<dbReference type="GO" id="GO:0005789">
    <property type="term" value="C:endoplasmic reticulum membrane"/>
    <property type="evidence" value="ECO:0007669"/>
    <property type="project" value="UniProtKB-SubCell"/>
</dbReference>
<dbReference type="GO" id="GO:0016020">
    <property type="term" value="C:membrane"/>
    <property type="evidence" value="ECO:0000318"/>
    <property type="project" value="GO_Central"/>
</dbReference>
<dbReference type="GO" id="GO:0030246">
    <property type="term" value="F:carbohydrate binding"/>
    <property type="evidence" value="ECO:0000314"/>
    <property type="project" value="UniProtKB"/>
</dbReference>
<dbReference type="GO" id="GO:0006487">
    <property type="term" value="P:protein N-linked glycosylation"/>
    <property type="evidence" value="ECO:0000305"/>
    <property type="project" value="UniProtKB"/>
</dbReference>
<dbReference type="FunFam" id="2.60.120.430:FF:000006">
    <property type="entry name" value="Malectin"/>
    <property type="match status" value="1"/>
</dbReference>
<dbReference type="Gene3D" id="2.60.120.430">
    <property type="entry name" value="Galactose-binding lectin"/>
    <property type="match status" value="1"/>
</dbReference>
<dbReference type="InterPro" id="IPR021720">
    <property type="entry name" value="Malectin_dom"/>
</dbReference>
<dbReference type="InterPro" id="IPR039155">
    <property type="entry name" value="MLEC"/>
</dbReference>
<dbReference type="PANTHER" id="PTHR13460">
    <property type="match status" value="1"/>
</dbReference>
<dbReference type="PANTHER" id="PTHR13460:SF0">
    <property type="entry name" value="MALECTIN"/>
    <property type="match status" value="1"/>
</dbReference>
<dbReference type="Pfam" id="PF11721">
    <property type="entry name" value="Malectin"/>
    <property type="match status" value="1"/>
</dbReference>